<keyword id="KW-0378">Hydrolase</keyword>
<keyword id="KW-0546">Nucleotide metabolism</keyword>
<keyword id="KW-0547">Nucleotide-binding</keyword>
<keyword id="KW-1185">Reference proteome</keyword>
<protein>
    <recommendedName>
        <fullName evidence="1">dCTP deaminase, dUMP-forming</fullName>
        <ecNumber evidence="1">3.5.4.30</ecNumber>
    </recommendedName>
    <alternativeName>
        <fullName evidence="1">Bifunctional dCTP deaminase:dUTPase</fullName>
    </alternativeName>
    <alternativeName>
        <fullName evidence="1">DCD-DUT</fullName>
    </alternativeName>
</protein>
<evidence type="ECO:0000255" key="1">
    <source>
        <dbReference type="HAMAP-Rule" id="MF_00146"/>
    </source>
</evidence>
<comment type="function">
    <text evidence="1">Bifunctional enzyme that catalyzes both the deamination of dCTP to dUTP and the hydrolysis of dUTP to dUMP without releasing the toxic dUTP intermediate.</text>
</comment>
<comment type="catalytic activity">
    <reaction evidence="1">
        <text>dCTP + 2 H2O = dUMP + NH4(+) + diphosphate</text>
        <dbReference type="Rhea" id="RHEA:19205"/>
        <dbReference type="ChEBI" id="CHEBI:15377"/>
        <dbReference type="ChEBI" id="CHEBI:28938"/>
        <dbReference type="ChEBI" id="CHEBI:33019"/>
        <dbReference type="ChEBI" id="CHEBI:61481"/>
        <dbReference type="ChEBI" id="CHEBI:246422"/>
        <dbReference type="EC" id="3.5.4.30"/>
    </reaction>
</comment>
<comment type="pathway">
    <text evidence="1">Pyrimidine metabolism; dUMP biosynthesis; dUMP from dCTP: step 1/1.</text>
</comment>
<comment type="subunit">
    <text evidence="1">Homotrimer.</text>
</comment>
<comment type="similarity">
    <text evidence="1">Belongs to the dCTP deaminase family.</text>
</comment>
<reference key="1">
    <citation type="journal article" date="2007" name="Appl. Environ. Microbiol.">
        <title>Genome sequence of the cellulolytic gliding bacterium Cytophaga hutchinsonii.</title>
        <authorList>
            <person name="Xie G."/>
            <person name="Bruce D.C."/>
            <person name="Challacombe J.F."/>
            <person name="Chertkov O."/>
            <person name="Detter J.C."/>
            <person name="Gilna P."/>
            <person name="Han C.S."/>
            <person name="Lucas S."/>
            <person name="Misra M."/>
            <person name="Myers G.L."/>
            <person name="Richardson P."/>
            <person name="Tapia R."/>
            <person name="Thayer N."/>
            <person name="Thompson L.S."/>
            <person name="Brettin T.S."/>
            <person name="Henrissat B."/>
            <person name="Wilson D.B."/>
            <person name="McBride M.J."/>
        </authorList>
    </citation>
    <scope>NUCLEOTIDE SEQUENCE [LARGE SCALE GENOMIC DNA]</scope>
    <source>
        <strain>ATCC 33406 / DSM 1761 / JCM 20678 / CIP 103989 / IAM 12607 / NBRC 15051 / NCIMB 9469 / D465</strain>
    </source>
</reference>
<accession>Q11TJ6</accession>
<organism>
    <name type="scientific">Cytophaga hutchinsonii (strain ATCC 33406 / DSM 1761 / CIP 103989 / NBRC 15051 / NCIMB 9469 / D465)</name>
    <dbReference type="NCBI Taxonomy" id="269798"/>
    <lineage>
        <taxon>Bacteria</taxon>
        <taxon>Pseudomonadati</taxon>
        <taxon>Bacteroidota</taxon>
        <taxon>Cytophagia</taxon>
        <taxon>Cytophagales</taxon>
        <taxon>Cytophagaceae</taxon>
        <taxon>Cytophaga</taxon>
    </lineage>
</organism>
<gene>
    <name evidence="1" type="primary">dcd</name>
    <name type="ordered locus">CHU_2002</name>
</gene>
<name>DCDB_CYTH3</name>
<feature type="chain" id="PRO_1000189826" description="dCTP deaminase, dUMP-forming">
    <location>
        <begin position="1"/>
        <end position="173"/>
    </location>
</feature>
<feature type="active site" description="Proton donor/acceptor" evidence="1">
    <location>
        <position position="121"/>
    </location>
</feature>
<feature type="binding site" evidence="1">
    <location>
        <begin position="93"/>
        <end position="98"/>
    </location>
    <ligand>
        <name>dCTP</name>
        <dbReference type="ChEBI" id="CHEBI:61481"/>
    </ligand>
</feature>
<feature type="binding site" evidence="1">
    <location>
        <position position="111"/>
    </location>
    <ligand>
        <name>dCTP</name>
        <dbReference type="ChEBI" id="CHEBI:61481"/>
    </ligand>
</feature>
<feature type="binding site" evidence="1">
    <location>
        <begin position="119"/>
        <end position="121"/>
    </location>
    <ligand>
        <name>dCTP</name>
        <dbReference type="ChEBI" id="CHEBI:61481"/>
    </ligand>
</feature>
<feature type="binding site" evidence="1">
    <location>
        <position position="138"/>
    </location>
    <ligand>
        <name>dCTP</name>
        <dbReference type="ChEBI" id="CHEBI:61481"/>
    </ligand>
</feature>
<feature type="binding site" evidence="1">
    <location>
        <position position="151"/>
    </location>
    <ligand>
        <name>dCTP</name>
        <dbReference type="ChEBI" id="CHEBI:61481"/>
    </ligand>
</feature>
<feature type="site" description="Important for bifunctional activity" evidence="1">
    <location>
        <begin position="108"/>
        <end position="109"/>
    </location>
</feature>
<dbReference type="EC" id="3.5.4.30" evidence="1"/>
<dbReference type="EMBL" id="CP000383">
    <property type="protein sequence ID" value="ABG59268.1"/>
    <property type="molecule type" value="Genomic_DNA"/>
</dbReference>
<dbReference type="RefSeq" id="WP_011585385.1">
    <property type="nucleotide sequence ID" value="NC_008255.1"/>
</dbReference>
<dbReference type="SMR" id="Q11TJ6"/>
<dbReference type="STRING" id="269798.CHU_2002"/>
<dbReference type="KEGG" id="chu:CHU_2002"/>
<dbReference type="eggNOG" id="COG0717">
    <property type="taxonomic scope" value="Bacteria"/>
</dbReference>
<dbReference type="HOGENOM" id="CLU_087476_0_1_10"/>
<dbReference type="OrthoDB" id="9780202at2"/>
<dbReference type="UniPathway" id="UPA00610">
    <property type="reaction ID" value="UER00667"/>
</dbReference>
<dbReference type="Proteomes" id="UP000001822">
    <property type="component" value="Chromosome"/>
</dbReference>
<dbReference type="GO" id="GO:0033973">
    <property type="term" value="F:dCTP deaminase (dUMP-forming) activity"/>
    <property type="evidence" value="ECO:0007669"/>
    <property type="project" value="UniProtKB-UniRule"/>
</dbReference>
<dbReference type="GO" id="GO:0008829">
    <property type="term" value="F:dCTP deaminase activity"/>
    <property type="evidence" value="ECO:0007669"/>
    <property type="project" value="InterPro"/>
</dbReference>
<dbReference type="GO" id="GO:0000166">
    <property type="term" value="F:nucleotide binding"/>
    <property type="evidence" value="ECO:0007669"/>
    <property type="project" value="UniProtKB-KW"/>
</dbReference>
<dbReference type="GO" id="GO:0006226">
    <property type="term" value="P:dUMP biosynthetic process"/>
    <property type="evidence" value="ECO:0007669"/>
    <property type="project" value="UniProtKB-UniRule"/>
</dbReference>
<dbReference type="GO" id="GO:0006229">
    <property type="term" value="P:dUTP biosynthetic process"/>
    <property type="evidence" value="ECO:0007669"/>
    <property type="project" value="InterPro"/>
</dbReference>
<dbReference type="GO" id="GO:0015949">
    <property type="term" value="P:nucleobase-containing small molecule interconversion"/>
    <property type="evidence" value="ECO:0007669"/>
    <property type="project" value="TreeGrafter"/>
</dbReference>
<dbReference type="CDD" id="cd07557">
    <property type="entry name" value="trimeric_dUTPase"/>
    <property type="match status" value="1"/>
</dbReference>
<dbReference type="Gene3D" id="2.70.40.10">
    <property type="match status" value="1"/>
</dbReference>
<dbReference type="HAMAP" id="MF_00146">
    <property type="entry name" value="dCTP_deaminase"/>
    <property type="match status" value="1"/>
</dbReference>
<dbReference type="InterPro" id="IPR011962">
    <property type="entry name" value="dCTP_deaminase"/>
</dbReference>
<dbReference type="InterPro" id="IPR036157">
    <property type="entry name" value="dUTPase-like_sf"/>
</dbReference>
<dbReference type="InterPro" id="IPR033704">
    <property type="entry name" value="dUTPase_trimeric"/>
</dbReference>
<dbReference type="NCBIfam" id="TIGR02274">
    <property type="entry name" value="dCTP_deam"/>
    <property type="match status" value="1"/>
</dbReference>
<dbReference type="PANTHER" id="PTHR42680">
    <property type="entry name" value="DCTP DEAMINASE"/>
    <property type="match status" value="1"/>
</dbReference>
<dbReference type="PANTHER" id="PTHR42680:SF3">
    <property type="entry name" value="DCTP DEAMINASE"/>
    <property type="match status" value="1"/>
</dbReference>
<dbReference type="Pfam" id="PF22769">
    <property type="entry name" value="DCD"/>
    <property type="match status" value="1"/>
</dbReference>
<dbReference type="SUPFAM" id="SSF51283">
    <property type="entry name" value="dUTPase-like"/>
    <property type="match status" value="1"/>
</dbReference>
<sequence length="173" mass="19809">MILSGLEIKDKLGSDIVIEPYDDSRLNPNSYNLRLHNELLVYDNNELDMKKPNTASPLIIPEEGLLLETGKLYLGRTIEYTESHNYVPMLEGRSSIGRLGLFVHVTAGFGDVGFCGFWTLEIFCVHPIRVYPGVEICQIFYHTIEGKYENYKSGKYQHNKGIQPSLLYKDFEK</sequence>
<proteinExistence type="inferred from homology"/>